<comment type="function">
    <text evidence="1">Necessary for normal cell division and for the maintenance of normal septation.</text>
</comment>
<comment type="cofactor">
    <cofactor evidence="1">
        <name>Mg(2+)</name>
        <dbReference type="ChEBI" id="CHEBI:18420"/>
    </cofactor>
</comment>
<comment type="similarity">
    <text evidence="1">Belongs to the TRAFAC class TrmE-Era-EngA-EngB-Septin-like GTPase superfamily. EngB GTPase family.</text>
</comment>
<dbReference type="EMBL" id="CP000524">
    <property type="protein sequence ID" value="ABM45085.1"/>
    <property type="molecule type" value="Genomic_DNA"/>
</dbReference>
<dbReference type="SMR" id="A1UTM1"/>
<dbReference type="STRING" id="360095.BARBAKC583_1049"/>
<dbReference type="GeneID" id="4683887"/>
<dbReference type="KEGG" id="bbk:BARBAKC583_1049"/>
<dbReference type="PATRIC" id="fig|360095.6.peg.1018"/>
<dbReference type="eggNOG" id="COG0218">
    <property type="taxonomic scope" value="Bacteria"/>
</dbReference>
<dbReference type="HOGENOM" id="CLU_033732_2_0_5"/>
<dbReference type="OrthoDB" id="9804921at2"/>
<dbReference type="Proteomes" id="UP000000643">
    <property type="component" value="Chromosome"/>
</dbReference>
<dbReference type="GO" id="GO:0005829">
    <property type="term" value="C:cytosol"/>
    <property type="evidence" value="ECO:0007669"/>
    <property type="project" value="TreeGrafter"/>
</dbReference>
<dbReference type="GO" id="GO:0005525">
    <property type="term" value="F:GTP binding"/>
    <property type="evidence" value="ECO:0007669"/>
    <property type="project" value="UniProtKB-UniRule"/>
</dbReference>
<dbReference type="GO" id="GO:0046872">
    <property type="term" value="F:metal ion binding"/>
    <property type="evidence" value="ECO:0007669"/>
    <property type="project" value="UniProtKB-KW"/>
</dbReference>
<dbReference type="GO" id="GO:0000917">
    <property type="term" value="P:division septum assembly"/>
    <property type="evidence" value="ECO:0007669"/>
    <property type="project" value="UniProtKB-KW"/>
</dbReference>
<dbReference type="CDD" id="cd01876">
    <property type="entry name" value="YihA_EngB"/>
    <property type="match status" value="1"/>
</dbReference>
<dbReference type="Gene3D" id="3.40.50.300">
    <property type="entry name" value="P-loop containing nucleotide triphosphate hydrolases"/>
    <property type="match status" value="1"/>
</dbReference>
<dbReference type="HAMAP" id="MF_00321">
    <property type="entry name" value="GTPase_EngB"/>
    <property type="match status" value="1"/>
</dbReference>
<dbReference type="InterPro" id="IPR030393">
    <property type="entry name" value="G_ENGB_dom"/>
</dbReference>
<dbReference type="InterPro" id="IPR006073">
    <property type="entry name" value="GTP-bd"/>
</dbReference>
<dbReference type="InterPro" id="IPR019987">
    <property type="entry name" value="GTP-bd_ribosome_bio_YsxC"/>
</dbReference>
<dbReference type="InterPro" id="IPR027417">
    <property type="entry name" value="P-loop_NTPase"/>
</dbReference>
<dbReference type="NCBIfam" id="TIGR03598">
    <property type="entry name" value="GTPase_YsxC"/>
    <property type="match status" value="1"/>
</dbReference>
<dbReference type="PANTHER" id="PTHR11649:SF13">
    <property type="entry name" value="ENGB-TYPE G DOMAIN-CONTAINING PROTEIN"/>
    <property type="match status" value="1"/>
</dbReference>
<dbReference type="PANTHER" id="PTHR11649">
    <property type="entry name" value="MSS1/TRME-RELATED GTP-BINDING PROTEIN"/>
    <property type="match status" value="1"/>
</dbReference>
<dbReference type="Pfam" id="PF01926">
    <property type="entry name" value="MMR_HSR1"/>
    <property type="match status" value="1"/>
</dbReference>
<dbReference type="SUPFAM" id="SSF52540">
    <property type="entry name" value="P-loop containing nucleoside triphosphate hydrolases"/>
    <property type="match status" value="1"/>
</dbReference>
<dbReference type="PROSITE" id="PS51706">
    <property type="entry name" value="G_ENGB"/>
    <property type="match status" value="1"/>
</dbReference>
<feature type="chain" id="PRO_1000005801" description="Probable GTP-binding protein EngB">
    <location>
        <begin position="1"/>
        <end position="215"/>
    </location>
</feature>
<feature type="domain" description="EngB-type G" evidence="1">
    <location>
        <begin position="31"/>
        <end position="215"/>
    </location>
</feature>
<feature type="binding site" evidence="1">
    <location>
        <begin position="39"/>
        <end position="46"/>
    </location>
    <ligand>
        <name>GTP</name>
        <dbReference type="ChEBI" id="CHEBI:37565"/>
    </ligand>
</feature>
<feature type="binding site" evidence="1">
    <location>
        <position position="46"/>
    </location>
    <ligand>
        <name>Mg(2+)</name>
        <dbReference type="ChEBI" id="CHEBI:18420"/>
    </ligand>
</feature>
<feature type="binding site" evidence="1">
    <location>
        <begin position="66"/>
        <end position="70"/>
    </location>
    <ligand>
        <name>GTP</name>
        <dbReference type="ChEBI" id="CHEBI:37565"/>
    </ligand>
</feature>
<feature type="binding site" evidence="1">
    <location>
        <position position="68"/>
    </location>
    <ligand>
        <name>Mg(2+)</name>
        <dbReference type="ChEBI" id="CHEBI:18420"/>
    </ligand>
</feature>
<feature type="binding site" evidence="1">
    <location>
        <begin position="93"/>
        <end position="96"/>
    </location>
    <ligand>
        <name>GTP</name>
        <dbReference type="ChEBI" id="CHEBI:37565"/>
    </ligand>
</feature>
<feature type="binding site" evidence="1">
    <location>
        <begin position="160"/>
        <end position="163"/>
    </location>
    <ligand>
        <name>GTP</name>
        <dbReference type="ChEBI" id="CHEBI:37565"/>
    </ligand>
</feature>
<feature type="binding site" evidence="1">
    <location>
        <begin position="194"/>
        <end position="196"/>
    </location>
    <ligand>
        <name>GTP</name>
        <dbReference type="ChEBI" id="CHEBI:37565"/>
    </ligand>
</feature>
<reference key="1">
    <citation type="submission" date="2006-12" db="EMBL/GenBank/DDBJ databases">
        <authorList>
            <person name="Hendrix L."/>
            <person name="Mohamoud Y."/>
            <person name="Radune D."/>
            <person name="Shvartsbeyn A."/>
            <person name="Daugherty S."/>
            <person name="Dodson R."/>
            <person name="Durkin A.S."/>
            <person name="Harkins D."/>
            <person name="Huot H."/>
            <person name="Kothari S.P."/>
            <person name="Madupu R."/>
            <person name="Li J."/>
            <person name="Nelson W.C."/>
            <person name="Shrivastava S."/>
            <person name="Giglio M.G."/>
            <person name="Haft D."/>
            <person name="Selengut J."/>
            <person name="Fraser-Ligget C."/>
            <person name="Seshadri R."/>
        </authorList>
    </citation>
    <scope>NUCLEOTIDE SEQUENCE [LARGE SCALE GENOMIC DNA]</scope>
    <source>
        <strain>ATCC 35685 / KC583 / Herrer 020/F12,63</strain>
    </source>
</reference>
<evidence type="ECO:0000255" key="1">
    <source>
        <dbReference type="HAMAP-Rule" id="MF_00321"/>
    </source>
</evidence>
<keyword id="KW-0131">Cell cycle</keyword>
<keyword id="KW-0132">Cell division</keyword>
<keyword id="KW-0342">GTP-binding</keyword>
<keyword id="KW-0460">Magnesium</keyword>
<keyword id="KW-0479">Metal-binding</keyword>
<keyword id="KW-0547">Nucleotide-binding</keyword>
<keyword id="KW-0717">Septation</keyword>
<gene>
    <name evidence="1" type="primary">engB</name>
    <name type="ordered locus">BARBAKC583_1049</name>
</gene>
<organism>
    <name type="scientific">Bartonella bacilliformis (strain ATCC 35685 / KC583 / Herrer 020/F12,63)</name>
    <dbReference type="NCBI Taxonomy" id="360095"/>
    <lineage>
        <taxon>Bacteria</taxon>
        <taxon>Pseudomonadati</taxon>
        <taxon>Pseudomonadota</taxon>
        <taxon>Alphaproteobacteria</taxon>
        <taxon>Hyphomicrobiales</taxon>
        <taxon>Bartonellaceae</taxon>
        <taxon>Bartonella</taxon>
    </lineage>
</organism>
<protein>
    <recommendedName>
        <fullName evidence="1">Probable GTP-binding protein EngB</fullName>
    </recommendedName>
</protein>
<name>ENGB_BARBK</name>
<sequence>MTQCSAFSGIFFRNWIFIRGVPTIQFLPPEGPPEIAFAGRSNVGKSSLINALVQQKGLARTSNTPGRTQELNYFVPDGFSGSKEDFPPMALVDMPGYGFAQAPKNLVDAWTHLVFNYLRGRTTLKRVYILIDSRHGIKKNDEEVLDLLDKAAVSYQIILTKSDKIKSNMLENLMTTTQMSLLKRPAAYPELLTTSAEKALGLEELRTAILQAVVQ</sequence>
<accession>A1UTM1</accession>
<proteinExistence type="inferred from homology"/>